<evidence type="ECO:0000255" key="1">
    <source>
        <dbReference type="HAMAP-Rule" id="MF_01863"/>
    </source>
</evidence>
<feature type="chain" id="PRO_0000372728" description="UPF0741 protein BCE_5513">
    <location>
        <begin position="1"/>
        <end position="74"/>
    </location>
</feature>
<gene>
    <name type="ordered locus">BCE_5513</name>
</gene>
<reference key="1">
    <citation type="journal article" date="2004" name="Nucleic Acids Res.">
        <title>The genome sequence of Bacillus cereus ATCC 10987 reveals metabolic adaptations and a large plasmid related to Bacillus anthracis pXO1.</title>
        <authorList>
            <person name="Rasko D.A."/>
            <person name="Ravel J."/>
            <person name="Oekstad O.A."/>
            <person name="Helgason E."/>
            <person name="Cer R.Z."/>
            <person name="Jiang L."/>
            <person name="Shores K.A."/>
            <person name="Fouts D.E."/>
            <person name="Tourasse N.J."/>
            <person name="Angiuoli S.V."/>
            <person name="Kolonay J.F."/>
            <person name="Nelson W.C."/>
            <person name="Kolstoe A.-B."/>
            <person name="Fraser C.M."/>
            <person name="Read T.D."/>
        </authorList>
    </citation>
    <scope>NUCLEOTIDE SEQUENCE [LARGE SCALE GENOMIC DNA]</scope>
    <source>
        <strain>ATCC 10987 / NRS 248</strain>
    </source>
</reference>
<proteinExistence type="inferred from homology"/>
<comment type="similarity">
    <text evidence="1">Belongs to the UPF0741 family.</text>
</comment>
<protein>
    <recommendedName>
        <fullName evidence="1">UPF0741 protein BCE_5513</fullName>
    </recommendedName>
</protein>
<organism>
    <name type="scientific">Bacillus cereus (strain ATCC 10987 / NRS 248)</name>
    <dbReference type="NCBI Taxonomy" id="222523"/>
    <lineage>
        <taxon>Bacteria</taxon>
        <taxon>Bacillati</taxon>
        <taxon>Bacillota</taxon>
        <taxon>Bacilli</taxon>
        <taxon>Bacillales</taxon>
        <taxon>Bacillaceae</taxon>
        <taxon>Bacillus</taxon>
        <taxon>Bacillus cereus group</taxon>
    </lineage>
</organism>
<name>Y5513_BACC1</name>
<accession>Q72X65</accession>
<dbReference type="EMBL" id="AE017194">
    <property type="protein sequence ID" value="AAS44413.1"/>
    <property type="molecule type" value="Genomic_DNA"/>
</dbReference>
<dbReference type="SMR" id="Q72X65"/>
<dbReference type="KEGG" id="bca:BCE_5513"/>
<dbReference type="HOGENOM" id="CLU_163820_1_0_9"/>
<dbReference type="Proteomes" id="UP000002527">
    <property type="component" value="Chromosome"/>
</dbReference>
<dbReference type="HAMAP" id="MF_01863">
    <property type="entry name" value="UPF0741"/>
    <property type="match status" value="1"/>
</dbReference>
<dbReference type="InterPro" id="IPR009910">
    <property type="entry name" value="DUF1450"/>
</dbReference>
<dbReference type="InterPro" id="IPR020880">
    <property type="entry name" value="UPF0741"/>
</dbReference>
<dbReference type="Pfam" id="PF07293">
    <property type="entry name" value="DUF1450"/>
    <property type="match status" value="1"/>
</dbReference>
<sequence length="74" mass="8132">MGNEFRVCDDCQATNVKTLIPKLKKVDSCATIEVGCQSYCGPGRKKSFAFVNNRPVAAPTEDELIVKIEAKLNK</sequence>